<name>AMPP1_PARBD</name>
<accession>C1GEY4</accession>
<reference key="1">
    <citation type="journal article" date="2011" name="PLoS Genet.">
        <title>Comparative genomic analysis of human fungal pathogens causing paracoccidioidomycosis.</title>
        <authorList>
            <person name="Desjardins C.A."/>
            <person name="Champion M.D."/>
            <person name="Holder J.W."/>
            <person name="Muszewska A."/>
            <person name="Goldberg J."/>
            <person name="Bailao A.M."/>
            <person name="Brigido M.M."/>
            <person name="Ferreira M.E."/>
            <person name="Garcia A.M."/>
            <person name="Grynberg M."/>
            <person name="Gujja S."/>
            <person name="Heiman D.I."/>
            <person name="Henn M.R."/>
            <person name="Kodira C.D."/>
            <person name="Leon-Narvaez H."/>
            <person name="Longo L.V.G."/>
            <person name="Ma L.-J."/>
            <person name="Malavazi I."/>
            <person name="Matsuo A.L."/>
            <person name="Morais F.V."/>
            <person name="Pereira M."/>
            <person name="Rodriguez-Brito S."/>
            <person name="Sakthikumar S."/>
            <person name="Salem-Izacc S.M."/>
            <person name="Sykes S.M."/>
            <person name="Teixeira M.M."/>
            <person name="Vallejo M.C."/>
            <person name="Walter M.E."/>
            <person name="Yandava C."/>
            <person name="Young S."/>
            <person name="Zeng Q."/>
            <person name="Zucker J."/>
            <person name="Felipe M.S."/>
            <person name="Goldman G.H."/>
            <person name="Haas B.J."/>
            <person name="McEwen J.G."/>
            <person name="Nino-Vega G."/>
            <person name="Puccia R."/>
            <person name="San-Blas G."/>
            <person name="Soares C.M."/>
            <person name="Birren B.W."/>
            <person name="Cuomo C.A."/>
        </authorList>
    </citation>
    <scope>NUCLEOTIDE SEQUENCE [LARGE SCALE GENOMIC DNA]</scope>
    <source>
        <strain>Pb18</strain>
    </source>
</reference>
<dbReference type="EC" id="3.4.11.9"/>
<dbReference type="EMBL" id="KN275963">
    <property type="protein sequence ID" value="EEH49741.2"/>
    <property type="molecule type" value="Genomic_DNA"/>
</dbReference>
<dbReference type="RefSeq" id="XP_010761227.1">
    <property type="nucleotide sequence ID" value="XM_010762925.1"/>
</dbReference>
<dbReference type="SMR" id="C1GEY4"/>
<dbReference type="FunCoup" id="C1GEY4">
    <property type="interactions" value="365"/>
</dbReference>
<dbReference type="STRING" id="502780.C1GEY4"/>
<dbReference type="GeneID" id="22584675"/>
<dbReference type="KEGG" id="pbn:PADG_05820"/>
<dbReference type="VEuPathDB" id="FungiDB:PADG_05820"/>
<dbReference type="eggNOG" id="KOG2413">
    <property type="taxonomic scope" value="Eukaryota"/>
</dbReference>
<dbReference type="HOGENOM" id="CLU_011781_2_3_1"/>
<dbReference type="InParanoid" id="C1GEY4"/>
<dbReference type="OMA" id="EPGMILS"/>
<dbReference type="OrthoDB" id="2480at33183"/>
<dbReference type="Proteomes" id="UP000001628">
    <property type="component" value="Unassembled WGS sequence"/>
</dbReference>
<dbReference type="GO" id="GO:0005737">
    <property type="term" value="C:cytoplasm"/>
    <property type="evidence" value="ECO:0007669"/>
    <property type="project" value="UniProtKB-ARBA"/>
</dbReference>
<dbReference type="GO" id="GO:0046872">
    <property type="term" value="F:metal ion binding"/>
    <property type="evidence" value="ECO:0007669"/>
    <property type="project" value="UniProtKB-KW"/>
</dbReference>
<dbReference type="GO" id="GO:0070006">
    <property type="term" value="F:metalloaminopeptidase activity"/>
    <property type="evidence" value="ECO:0007669"/>
    <property type="project" value="InterPro"/>
</dbReference>
<dbReference type="GO" id="GO:0006508">
    <property type="term" value="P:proteolysis"/>
    <property type="evidence" value="ECO:0007669"/>
    <property type="project" value="UniProtKB-KW"/>
</dbReference>
<dbReference type="CDD" id="cd01085">
    <property type="entry name" value="APP"/>
    <property type="match status" value="1"/>
</dbReference>
<dbReference type="FunFam" id="3.40.350.10:FF:000010">
    <property type="entry name" value="Probable Xaa-Pro aminopeptidase P"/>
    <property type="match status" value="1"/>
</dbReference>
<dbReference type="FunFam" id="3.90.230.10:FF:000007">
    <property type="entry name" value="Xaa-Pro aminopeptidase P"/>
    <property type="match status" value="1"/>
</dbReference>
<dbReference type="FunFam" id="3.40.350.10:FF:000003">
    <property type="entry name" value="Xaa-pro aminopeptidase P"/>
    <property type="match status" value="1"/>
</dbReference>
<dbReference type="Gene3D" id="3.90.230.10">
    <property type="entry name" value="Creatinase/methionine aminopeptidase superfamily"/>
    <property type="match status" value="1"/>
</dbReference>
<dbReference type="Gene3D" id="3.40.350.10">
    <property type="entry name" value="Creatinase/prolidase N-terminal domain"/>
    <property type="match status" value="2"/>
</dbReference>
<dbReference type="InterPro" id="IPR029149">
    <property type="entry name" value="Creatin/AminoP/Spt16_N"/>
</dbReference>
<dbReference type="InterPro" id="IPR036005">
    <property type="entry name" value="Creatinase/aminopeptidase-like"/>
</dbReference>
<dbReference type="InterPro" id="IPR000587">
    <property type="entry name" value="Creatinase_N"/>
</dbReference>
<dbReference type="InterPro" id="IPR000994">
    <property type="entry name" value="Pept_M24"/>
</dbReference>
<dbReference type="InterPro" id="IPR033740">
    <property type="entry name" value="Pept_M24B"/>
</dbReference>
<dbReference type="InterPro" id="IPR032416">
    <property type="entry name" value="Peptidase_M24_C"/>
</dbReference>
<dbReference type="InterPro" id="IPR001131">
    <property type="entry name" value="Peptidase_M24B_aminopep-P_CS"/>
</dbReference>
<dbReference type="InterPro" id="IPR050422">
    <property type="entry name" value="X-Pro_aminopeptidase_P"/>
</dbReference>
<dbReference type="PANTHER" id="PTHR43763">
    <property type="entry name" value="XAA-PRO AMINOPEPTIDASE 1"/>
    <property type="match status" value="1"/>
</dbReference>
<dbReference type="PANTHER" id="PTHR43763:SF6">
    <property type="entry name" value="XAA-PRO AMINOPEPTIDASE 1"/>
    <property type="match status" value="1"/>
</dbReference>
<dbReference type="Pfam" id="PF01321">
    <property type="entry name" value="Creatinase_N"/>
    <property type="match status" value="1"/>
</dbReference>
<dbReference type="Pfam" id="PF16189">
    <property type="entry name" value="Creatinase_N_2"/>
    <property type="match status" value="1"/>
</dbReference>
<dbReference type="Pfam" id="PF00557">
    <property type="entry name" value="Peptidase_M24"/>
    <property type="match status" value="1"/>
</dbReference>
<dbReference type="Pfam" id="PF16188">
    <property type="entry name" value="Peptidase_M24_C"/>
    <property type="match status" value="1"/>
</dbReference>
<dbReference type="SUPFAM" id="SSF55920">
    <property type="entry name" value="Creatinase/aminopeptidase"/>
    <property type="match status" value="1"/>
</dbReference>
<dbReference type="SUPFAM" id="SSF53092">
    <property type="entry name" value="Creatinase/prolidase N-terminal domain"/>
    <property type="match status" value="1"/>
</dbReference>
<dbReference type="PROSITE" id="PS00491">
    <property type="entry name" value="PROLINE_PEPTIDASE"/>
    <property type="match status" value="1"/>
</dbReference>
<evidence type="ECO:0000250" key="1"/>
<evidence type="ECO:0000305" key="2"/>
<protein>
    <recommendedName>
        <fullName>Probable Xaa-Pro aminopeptidase P</fullName>
        <shortName>AMPP</shortName>
        <shortName>Aminopeptidase P</shortName>
        <ecNumber>3.4.11.9</ecNumber>
    </recommendedName>
    <alternativeName>
        <fullName>Aminoacylproline aminopeptidase</fullName>
    </alternativeName>
    <alternativeName>
        <fullName>Prolidase</fullName>
    </alternativeName>
</protein>
<feature type="chain" id="PRO_0000411801" description="Probable Xaa-Pro aminopeptidase P">
    <location>
        <begin position="1"/>
        <end position="616"/>
    </location>
</feature>
<feature type="binding site" evidence="1">
    <location>
        <position position="413"/>
    </location>
    <ligand>
        <name>Mn(2+)</name>
        <dbReference type="ChEBI" id="CHEBI:29035"/>
        <label>2</label>
    </ligand>
</feature>
<feature type="binding site" evidence="1">
    <location>
        <position position="424"/>
    </location>
    <ligand>
        <name>Mn(2+)</name>
        <dbReference type="ChEBI" id="CHEBI:29035"/>
        <label>1</label>
    </ligand>
</feature>
<feature type="binding site" evidence="1">
    <location>
        <position position="424"/>
    </location>
    <ligand>
        <name>Mn(2+)</name>
        <dbReference type="ChEBI" id="CHEBI:29035"/>
        <label>2</label>
    </ligand>
</feature>
<feature type="binding site" evidence="1">
    <location>
        <position position="522"/>
    </location>
    <ligand>
        <name>Mn(2+)</name>
        <dbReference type="ChEBI" id="CHEBI:29035"/>
        <label>1</label>
    </ligand>
</feature>
<feature type="binding site" evidence="1">
    <location>
        <position position="536"/>
    </location>
    <ligand>
        <name>Mn(2+)</name>
        <dbReference type="ChEBI" id="CHEBI:29035"/>
        <label>1</label>
    </ligand>
</feature>
<feature type="binding site" evidence="1">
    <location>
        <position position="536"/>
    </location>
    <ligand>
        <name>Mn(2+)</name>
        <dbReference type="ChEBI" id="CHEBI:29035"/>
        <label>2</label>
    </ligand>
</feature>
<gene>
    <name type="primary">AMPP</name>
    <name type="ORF">PADG_05820</name>
</gene>
<proteinExistence type="inferred from homology"/>
<sequence length="616" mass="68631">METVDTSQRLARLRELMKERNVDVYLVPSEDSHQSEYIAPCDGRREFISGFSGSAGCAIVSMTKAALSTDGRYFNQASKQLDNNWLLLKRGIESMPTWQEWTAEQLEGGKVVGVDPSLITASDARSLSETIKRSGGSLLGVQENLVDLVWGKDRPCRPSEKVTVHPVEFAGKSFEEKITDLRKELEKKKSAGFVVSMLDEVAWLFNLRGNDIPYNPVFFSYAIITPSTADLYIDEEKLSADVKKHLGDKVSLKPYTSIFEDAKALGQSAQAEVNGGASDPPRKFFISTKASWSLSLALGGANKVEEVRSPISDAKAIKNDTELEGMRACHIRDGAALTKYFAWLENELVNKKTVLNEVEASDKLEEIRSKQKNFVGLSFDTISSSGPNAAVVHYKAERNNCSIIDPEAVYLCDSGAQYLDGTTDTTRTLHFGEPTEKERKAYTLVLKGMIAIDTAIFPKGTTGFSLDTLARQFLWKEGLDYLHGTGHGVGSYLNVHEGPIGIGTRVQYSETPLSVGNVISDEPGYYEDGKFGIRIENIIMAREVKTTFSFGERPWLGFEHVTMTPLCRKLTDPSLLNDAEKKWINEYHSEVWEKTSGYFAEDELTRNWLKRETQPI</sequence>
<keyword id="KW-0031">Aminopeptidase</keyword>
<keyword id="KW-0378">Hydrolase</keyword>
<keyword id="KW-0464">Manganese</keyword>
<keyword id="KW-0479">Metal-binding</keyword>
<keyword id="KW-0482">Metalloprotease</keyword>
<keyword id="KW-0645">Protease</keyword>
<keyword id="KW-1185">Reference proteome</keyword>
<comment type="function">
    <text evidence="1">Catalyzes the removal of a penultimate prolyl residue from the N-termini of peptides.</text>
</comment>
<comment type="catalytic activity">
    <reaction>
        <text>Release of any N-terminal amino acid, including proline, that is linked to proline, even from a dipeptide or tripeptide.</text>
        <dbReference type="EC" id="3.4.11.9"/>
    </reaction>
</comment>
<comment type="cofactor">
    <cofactor evidence="1">
        <name>Mn(2+)</name>
        <dbReference type="ChEBI" id="CHEBI:29035"/>
    </cofactor>
    <text evidence="1">Binds 2 manganese ions per subunit.</text>
</comment>
<comment type="similarity">
    <text evidence="2">Belongs to the peptidase M24B family.</text>
</comment>
<organism>
    <name type="scientific">Paracoccidioides brasiliensis (strain Pb18)</name>
    <dbReference type="NCBI Taxonomy" id="502780"/>
    <lineage>
        <taxon>Eukaryota</taxon>
        <taxon>Fungi</taxon>
        <taxon>Dikarya</taxon>
        <taxon>Ascomycota</taxon>
        <taxon>Pezizomycotina</taxon>
        <taxon>Eurotiomycetes</taxon>
        <taxon>Eurotiomycetidae</taxon>
        <taxon>Onygenales</taxon>
        <taxon>Ajellomycetaceae</taxon>
        <taxon>Paracoccidioides</taxon>
    </lineage>
</organism>